<keyword id="KW-0002">3D-structure</keyword>
<keyword id="KW-0010">Activator</keyword>
<keyword id="KW-0067">ATP-binding</keyword>
<keyword id="KW-0158">Chromosome</keyword>
<keyword id="KW-0963">Cytoplasm</keyword>
<keyword id="KW-0378">Hydrolase</keyword>
<keyword id="KW-0418">Kinase</keyword>
<keyword id="KW-0547">Nucleotide-binding</keyword>
<keyword id="KW-0539">Nucleus</keyword>
<keyword id="KW-0597">Phosphoprotein</keyword>
<keyword id="KW-1185">Reference proteome</keyword>
<keyword id="KW-0723">Serine/threonine-protein kinase</keyword>
<keyword id="KW-0779">Telomere</keyword>
<keyword id="KW-0804">Transcription</keyword>
<keyword id="KW-0805">Transcription regulation</keyword>
<keyword id="KW-0808">Transferase</keyword>
<keyword id="KW-0819">tRNA processing</keyword>
<organism>
    <name type="scientific">Saccharomyces cerevisiae (strain ATCC 204508 / S288c)</name>
    <name type="common">Baker's yeast</name>
    <dbReference type="NCBI Taxonomy" id="559292"/>
    <lineage>
        <taxon>Eukaryota</taxon>
        <taxon>Fungi</taxon>
        <taxon>Dikarya</taxon>
        <taxon>Ascomycota</taxon>
        <taxon>Saccharomycotina</taxon>
        <taxon>Saccharomycetes</taxon>
        <taxon>Saccharomycetales</taxon>
        <taxon>Saccharomycetaceae</taxon>
        <taxon>Saccharomyces</taxon>
    </lineage>
</organism>
<dbReference type="EC" id="3.6.-.-" evidence="1"/>
<dbReference type="EC" id="2.7.11.1" evidence="14"/>
<dbReference type="EMBL" id="Y07777">
    <property type="protein sequence ID" value="CAA69084.1"/>
    <property type="molecule type" value="Genomic_DNA"/>
</dbReference>
<dbReference type="EMBL" id="Z73047">
    <property type="protein sequence ID" value="CAA97291.1"/>
    <property type="molecule type" value="Genomic_DNA"/>
</dbReference>
<dbReference type="EMBL" id="AY558547">
    <property type="protein sequence ID" value="AAS56873.1"/>
    <property type="molecule type" value="Genomic_DNA"/>
</dbReference>
<dbReference type="EMBL" id="BK006941">
    <property type="protein sequence ID" value="DAA08352.1"/>
    <property type="molecule type" value="Genomic_DNA"/>
</dbReference>
<dbReference type="PIR" id="S64595">
    <property type="entry name" value="S64595"/>
</dbReference>
<dbReference type="RefSeq" id="NP_011778.1">
    <property type="nucleotide sequence ID" value="NM_001181391.1"/>
</dbReference>
<dbReference type="PDB" id="4WW5">
    <property type="method" value="X-ray"/>
    <property type="resolution" value="2.00 A"/>
    <property type="chains" value="A=1-261"/>
</dbReference>
<dbReference type="PDB" id="4WW7">
    <property type="method" value="X-ray"/>
    <property type="resolution" value="1.67 A"/>
    <property type="chains" value="A=1-261"/>
</dbReference>
<dbReference type="PDB" id="4WW9">
    <property type="method" value="X-ray"/>
    <property type="resolution" value="1.95 A"/>
    <property type="chains" value="A=1-261"/>
</dbReference>
<dbReference type="PDB" id="4WWA">
    <property type="method" value="X-ray"/>
    <property type="resolution" value="2.95 A"/>
    <property type="chains" value="A=1-261"/>
</dbReference>
<dbReference type="PDBsum" id="4WW5"/>
<dbReference type="PDBsum" id="4WW7"/>
<dbReference type="PDBsum" id="4WW9"/>
<dbReference type="PDBsum" id="4WWA"/>
<dbReference type="SMR" id="P53323"/>
<dbReference type="BioGRID" id="33513">
    <property type="interactions" value="137"/>
</dbReference>
<dbReference type="ComplexPortal" id="CPX-995">
    <property type="entry name" value="KEOPS tRNA N6-adenosine threonylcarbamoyltransferase complex"/>
</dbReference>
<dbReference type="DIP" id="DIP-5008N"/>
<dbReference type="FunCoup" id="P53323">
    <property type="interactions" value="1040"/>
</dbReference>
<dbReference type="IntAct" id="P53323">
    <property type="interactions" value="70"/>
</dbReference>
<dbReference type="MINT" id="P53323"/>
<dbReference type="STRING" id="4932.YGR262C"/>
<dbReference type="ChEMBL" id="CHEMBL4515"/>
<dbReference type="iPTMnet" id="P53323"/>
<dbReference type="PaxDb" id="4932-YGR262C"/>
<dbReference type="PeptideAtlas" id="P53323"/>
<dbReference type="DNASU" id="853178"/>
<dbReference type="EnsemblFungi" id="YGR262C_mRNA">
    <property type="protein sequence ID" value="YGR262C"/>
    <property type="gene ID" value="YGR262C"/>
</dbReference>
<dbReference type="GeneID" id="853178"/>
<dbReference type="KEGG" id="sce:YGR262C"/>
<dbReference type="AGR" id="SGD:S000003494"/>
<dbReference type="SGD" id="S000003494">
    <property type="gene designation" value="BUD32"/>
</dbReference>
<dbReference type="VEuPathDB" id="FungiDB:YGR262C"/>
<dbReference type="eggNOG" id="KOG3087">
    <property type="taxonomic scope" value="Eukaryota"/>
</dbReference>
<dbReference type="GeneTree" id="ENSGT00390000012914"/>
<dbReference type="HOGENOM" id="CLU_063953_1_1_1"/>
<dbReference type="InParanoid" id="P53323"/>
<dbReference type="OMA" id="HKLYMEY"/>
<dbReference type="OrthoDB" id="3399at2759"/>
<dbReference type="BioCyc" id="MetaCyc:G3O-30931-MONOMER"/>
<dbReference type="BioCyc" id="YEAST:G3O-30931-MONOMER"/>
<dbReference type="BRENDA" id="2.7.11.1">
    <property type="organism ID" value="984"/>
</dbReference>
<dbReference type="BioGRID-ORCS" id="853178">
    <property type="hits" value="1 hit in 13 CRISPR screens"/>
</dbReference>
<dbReference type="EvolutionaryTrace" id="P53323"/>
<dbReference type="PRO" id="PR:P53323"/>
<dbReference type="Proteomes" id="UP000002311">
    <property type="component" value="Chromosome VII"/>
</dbReference>
<dbReference type="RNAct" id="P53323">
    <property type="molecule type" value="protein"/>
</dbReference>
<dbReference type="GO" id="GO:0000781">
    <property type="term" value="C:chromosome, telomeric region"/>
    <property type="evidence" value="ECO:0007669"/>
    <property type="project" value="UniProtKB-SubCell"/>
</dbReference>
<dbReference type="GO" id="GO:0005737">
    <property type="term" value="C:cytoplasm"/>
    <property type="evidence" value="ECO:0007005"/>
    <property type="project" value="SGD"/>
</dbReference>
<dbReference type="GO" id="GO:0005829">
    <property type="term" value="C:cytosol"/>
    <property type="evidence" value="ECO:0000318"/>
    <property type="project" value="GO_Central"/>
</dbReference>
<dbReference type="GO" id="GO:0000408">
    <property type="term" value="C:EKC/KEOPS complex"/>
    <property type="evidence" value="ECO:0000314"/>
    <property type="project" value="SGD"/>
</dbReference>
<dbReference type="GO" id="GO:0005654">
    <property type="term" value="C:nucleoplasm"/>
    <property type="evidence" value="ECO:0000304"/>
    <property type="project" value="Reactome"/>
</dbReference>
<dbReference type="GO" id="GO:0005634">
    <property type="term" value="C:nucleus"/>
    <property type="evidence" value="ECO:0000314"/>
    <property type="project" value="SGD"/>
</dbReference>
<dbReference type="GO" id="GO:0005524">
    <property type="term" value="F:ATP binding"/>
    <property type="evidence" value="ECO:0007669"/>
    <property type="project" value="UniProtKB-KW"/>
</dbReference>
<dbReference type="GO" id="GO:0016887">
    <property type="term" value="F:ATP hydrolysis activity"/>
    <property type="evidence" value="ECO:0000314"/>
    <property type="project" value="SGD"/>
</dbReference>
<dbReference type="GO" id="GO:0106310">
    <property type="term" value="F:protein serine kinase activity"/>
    <property type="evidence" value="ECO:0007669"/>
    <property type="project" value="RHEA"/>
</dbReference>
<dbReference type="GO" id="GO:0004674">
    <property type="term" value="F:protein serine/threonine kinase activity"/>
    <property type="evidence" value="ECO:0000314"/>
    <property type="project" value="SGD"/>
</dbReference>
<dbReference type="GO" id="GO:0000282">
    <property type="term" value="P:cellular bud site selection"/>
    <property type="evidence" value="ECO:0007001"/>
    <property type="project" value="SGD"/>
</dbReference>
<dbReference type="GO" id="GO:1990145">
    <property type="term" value="P:maintenance of translational fidelity"/>
    <property type="evidence" value="ECO:0000303"/>
    <property type="project" value="ComplexPortal"/>
</dbReference>
<dbReference type="GO" id="GO:0045944">
    <property type="term" value="P:positive regulation of transcription by RNA polymerase II"/>
    <property type="evidence" value="ECO:0000353"/>
    <property type="project" value="SGD"/>
</dbReference>
<dbReference type="GO" id="GO:0000723">
    <property type="term" value="P:telomere maintenance"/>
    <property type="evidence" value="ECO:0000315"/>
    <property type="project" value="SGD"/>
</dbReference>
<dbReference type="GO" id="GO:0000722">
    <property type="term" value="P:telomere maintenance via recombination"/>
    <property type="evidence" value="ECO:0000315"/>
    <property type="project" value="SGD"/>
</dbReference>
<dbReference type="GO" id="GO:0070525">
    <property type="term" value="P:tRNA threonylcarbamoyladenosine metabolic process"/>
    <property type="evidence" value="ECO:0000315"/>
    <property type="project" value="SGD"/>
</dbReference>
<dbReference type="GO" id="GO:0002949">
    <property type="term" value="P:tRNA threonylcarbamoyladenosine modification"/>
    <property type="evidence" value="ECO:0000303"/>
    <property type="project" value="ComplexPortal"/>
</dbReference>
<dbReference type="FunFam" id="1.10.510.10:FF:000745">
    <property type="entry name" value="Serine/threonine-protein kinase BUD32"/>
    <property type="match status" value="1"/>
</dbReference>
<dbReference type="FunFam" id="3.30.200.20:FF:000639">
    <property type="entry name" value="Serine/threonine-protein kinase BUD32"/>
    <property type="match status" value="1"/>
</dbReference>
<dbReference type="Gene3D" id="3.30.200.20">
    <property type="entry name" value="Phosphorylase Kinase, domain 1"/>
    <property type="match status" value="1"/>
</dbReference>
<dbReference type="Gene3D" id="1.10.510.10">
    <property type="entry name" value="Transferase(Phosphotransferase) domain 1"/>
    <property type="match status" value="1"/>
</dbReference>
<dbReference type="InterPro" id="IPR022495">
    <property type="entry name" value="Bud32"/>
</dbReference>
<dbReference type="InterPro" id="IPR011009">
    <property type="entry name" value="Kinase-like_dom_sf"/>
</dbReference>
<dbReference type="InterPro" id="IPR000719">
    <property type="entry name" value="Prot_kinase_dom"/>
</dbReference>
<dbReference type="InterPro" id="IPR008266">
    <property type="entry name" value="Tyr_kinase_AS"/>
</dbReference>
<dbReference type="NCBIfam" id="TIGR03724">
    <property type="entry name" value="arch_bud32"/>
    <property type="match status" value="1"/>
</dbReference>
<dbReference type="PANTHER" id="PTHR12209:SF0">
    <property type="entry name" value="EKC_KEOPS COMPLEX SUBUNIT TP53RK"/>
    <property type="match status" value="1"/>
</dbReference>
<dbReference type="PANTHER" id="PTHR12209">
    <property type="entry name" value="NON-SPECIFIC SERINE/THREONINE PROTEIN KINASE"/>
    <property type="match status" value="1"/>
</dbReference>
<dbReference type="Pfam" id="PF06293">
    <property type="entry name" value="Kdo"/>
    <property type="match status" value="1"/>
</dbReference>
<dbReference type="SUPFAM" id="SSF56112">
    <property type="entry name" value="Protein kinase-like (PK-like)"/>
    <property type="match status" value="1"/>
</dbReference>
<dbReference type="PROSITE" id="PS50011">
    <property type="entry name" value="PROTEIN_KINASE_DOM"/>
    <property type="match status" value="1"/>
</dbReference>
<dbReference type="PROSITE" id="PS00109">
    <property type="entry name" value="PROTEIN_KINASE_TYR"/>
    <property type="match status" value="1"/>
</dbReference>
<feature type="chain" id="PRO_0000088189" description="EKC/KEOPS complex subunit BUD32">
    <location>
        <begin position="1"/>
        <end position="261"/>
    </location>
</feature>
<feature type="domain" description="Protein kinase" evidence="2">
    <location>
        <begin position="16"/>
        <end position="261"/>
    </location>
</feature>
<feature type="active site" description="Proton acceptor" evidence="2 3">
    <location>
        <position position="161"/>
    </location>
</feature>
<feature type="binding site" evidence="2">
    <location>
        <begin position="22"/>
        <end position="30"/>
    </location>
    <ligand>
        <name>ATP</name>
        <dbReference type="ChEBI" id="CHEBI:30616"/>
    </ligand>
</feature>
<feature type="binding site" evidence="2">
    <location>
        <position position="43"/>
    </location>
    <ligand>
        <name>ATP</name>
        <dbReference type="ChEBI" id="CHEBI:30616"/>
    </ligand>
</feature>
<feature type="modified residue" description="Phosphoserine; by autocatalysis" evidence="4">
    <location>
        <position position="187"/>
    </location>
</feature>
<feature type="modified residue" description="Phosphoserine; by autocatalysis" evidence="4">
    <location>
        <position position="189"/>
    </location>
</feature>
<feature type="mutagenesis site" description="Reduced kinase activity." evidence="4">
    <original>S</original>
    <variation>A</variation>
    <location>
        <position position="187"/>
    </location>
</feature>
<feature type="mutagenesis site" description="Reduced kinase activity." evidence="4">
    <original>S</original>
    <variation>A</variation>
    <location>
        <position position="189"/>
    </location>
</feature>
<feature type="helix" evidence="15">
    <location>
        <begin position="5"/>
        <end position="13"/>
    </location>
</feature>
<feature type="strand" evidence="15">
    <location>
        <begin position="20"/>
        <end position="24"/>
    </location>
</feature>
<feature type="strand" evidence="15">
    <location>
        <begin position="29"/>
        <end position="35"/>
    </location>
</feature>
<feature type="strand" evidence="15">
    <location>
        <begin position="37"/>
        <end position="39"/>
    </location>
</feature>
<feature type="strand" evidence="15">
    <location>
        <begin position="49"/>
        <end position="53"/>
    </location>
</feature>
<feature type="helix" evidence="15">
    <location>
        <begin position="73"/>
        <end position="84"/>
    </location>
</feature>
<feature type="strand" evidence="15">
    <location>
        <begin position="94"/>
        <end position="98"/>
    </location>
</feature>
<feature type="turn" evidence="15">
    <location>
        <begin position="99"/>
        <end position="102"/>
    </location>
</feature>
<feature type="strand" evidence="15">
    <location>
        <begin position="103"/>
        <end position="107"/>
    </location>
</feature>
<feature type="helix" evidence="15">
    <location>
        <begin position="114"/>
        <end position="116"/>
    </location>
</feature>
<feature type="strand" evidence="16">
    <location>
        <begin position="118"/>
        <end position="121"/>
    </location>
</feature>
<feature type="helix" evidence="15">
    <location>
        <begin position="122"/>
        <end position="129"/>
    </location>
</feature>
<feature type="helix" evidence="15">
    <location>
        <begin position="136"/>
        <end position="154"/>
    </location>
</feature>
<feature type="strand" evidence="15">
    <location>
        <begin position="166"/>
        <end position="172"/>
    </location>
</feature>
<feature type="strand" evidence="15">
    <location>
        <begin position="175"/>
        <end position="180"/>
    </location>
</feature>
<feature type="helix" evidence="15">
    <location>
        <begin position="192"/>
        <end position="207"/>
    </location>
</feature>
<feature type="helix" evidence="15">
    <location>
        <begin position="214"/>
        <end position="230"/>
    </location>
</feature>
<feature type="helix" evidence="15">
    <location>
        <begin position="233"/>
        <end position="253"/>
    </location>
</feature>
<evidence type="ECO:0000250" key="1">
    <source>
        <dbReference type="UniProtKB" id="Q9UYB9"/>
    </source>
</evidence>
<evidence type="ECO:0000255" key="2">
    <source>
        <dbReference type="PROSITE-ProRule" id="PRU00159"/>
    </source>
</evidence>
<evidence type="ECO:0000255" key="3">
    <source>
        <dbReference type="PROSITE-ProRule" id="PRU10028"/>
    </source>
</evidence>
<evidence type="ECO:0000269" key="4">
    <source>
    </source>
</evidence>
<evidence type="ECO:0000269" key="5">
    <source>
    </source>
</evidence>
<evidence type="ECO:0000269" key="6">
    <source>
    </source>
</evidence>
<evidence type="ECO:0000269" key="7">
    <source>
    </source>
</evidence>
<evidence type="ECO:0000269" key="8">
    <source>
    </source>
</evidence>
<evidence type="ECO:0000269" key="9">
    <source>
    </source>
</evidence>
<evidence type="ECO:0000269" key="10">
    <source>
    </source>
</evidence>
<evidence type="ECO:0000269" key="11">
    <source>
    </source>
</evidence>
<evidence type="ECO:0000269" key="12">
    <source>
    </source>
</evidence>
<evidence type="ECO:0000305" key="13"/>
<evidence type="ECO:0000305" key="14">
    <source>
    </source>
</evidence>
<evidence type="ECO:0007829" key="15">
    <source>
        <dbReference type="PDB" id="4WW7"/>
    </source>
</evidence>
<evidence type="ECO:0007829" key="16">
    <source>
        <dbReference type="PDB" id="4WWA"/>
    </source>
</evidence>
<sequence>MTQEFIDKVSSYLTPDVDIAPISQGAEAIVFTTTTHPYLPRAKDSHQKYIIKYRPPKRYRHPQIDQALTKHRTLNESRLLAKLYLIPGLCVPQLIACDPYNGFIWLEFLGEDLPGGHGFSNLKNFLWMHDQDPYSDLVATTLRKVGRQIGLLHWNDYCHGDLTSSNIVLVRDGARWTPHLIDFGLGSVSNLVEDKGVDLYVLERAILSTHSKHAEKYNAWIMEGFEEVYREQGAKGAKKLKEVTKRFEEVRLRGRKRSMLG</sequence>
<comment type="function">
    <text evidence="7 8 9 10 11 12">Component of the EKC/KEOPS complex that is required for the formation of a threonylcarbamoyl group on adenosine at position 37 (t(6)A37) in tRNAs that read codons beginning with adenine. The complex is probably involved in the transfer of the threonylcarbamoyl moiety of threonylcarbamoyl-AMP (TC-AMP) to the N6 group of A37. BUD32 has ATPase activity in the context of the EKC/KEOPS complex and likely plays a supporting role to the catalytic subunit KAE1. The EKC/KEOPS complex also promotes both telomere uncapping and telomere elongation. The complex is required for efficient recruitment of transcriptional coactivators. Important for bud site selection.</text>
</comment>
<comment type="catalytic activity">
    <reaction evidence="14">
        <text>L-seryl-[protein] + ATP = O-phospho-L-seryl-[protein] + ADP + H(+)</text>
        <dbReference type="Rhea" id="RHEA:17989"/>
        <dbReference type="Rhea" id="RHEA-COMP:9863"/>
        <dbReference type="Rhea" id="RHEA-COMP:11604"/>
        <dbReference type="ChEBI" id="CHEBI:15378"/>
        <dbReference type="ChEBI" id="CHEBI:29999"/>
        <dbReference type="ChEBI" id="CHEBI:30616"/>
        <dbReference type="ChEBI" id="CHEBI:83421"/>
        <dbReference type="ChEBI" id="CHEBI:456216"/>
        <dbReference type="EC" id="2.7.11.1"/>
    </reaction>
</comment>
<comment type="catalytic activity">
    <reaction evidence="14">
        <text>L-threonyl-[protein] + ATP = O-phospho-L-threonyl-[protein] + ADP + H(+)</text>
        <dbReference type="Rhea" id="RHEA:46608"/>
        <dbReference type="Rhea" id="RHEA-COMP:11060"/>
        <dbReference type="Rhea" id="RHEA-COMP:11605"/>
        <dbReference type="ChEBI" id="CHEBI:15378"/>
        <dbReference type="ChEBI" id="CHEBI:30013"/>
        <dbReference type="ChEBI" id="CHEBI:30616"/>
        <dbReference type="ChEBI" id="CHEBI:61977"/>
        <dbReference type="ChEBI" id="CHEBI:456216"/>
        <dbReference type="EC" id="2.7.11.1"/>
    </reaction>
</comment>
<comment type="subunit">
    <text evidence="7 8">Component of the EKC/KEOPS complex composed of at least BUD32, CGI121, GON7, KAE1 and PCC1; the whole complex dimerizes.</text>
</comment>
<comment type="interaction">
    <interactant intactId="EBI-3809">
        <id>P53323</id>
    </interactant>
    <interactant intactId="EBI-912262">
        <id>Q03705</id>
        <label>CGI121</label>
    </interactant>
    <organismsDiffer>false</organismsDiffer>
    <experiments>10</experiments>
</comment>
<comment type="interaction">
    <interactant intactId="EBI-3809">
        <id>P53323</id>
    </interactant>
    <interactant intactId="EBI-26178">
        <id>P46984</id>
        <label>GON7</label>
    </interactant>
    <organismsDiffer>false</organismsDiffer>
    <experiments>7</experiments>
</comment>
<comment type="interaction">
    <interactant intactId="EBI-3809">
        <id>P53323</id>
    </interactant>
    <interactant intactId="EBI-22178">
        <id>Q03835</id>
        <label>GRX3</label>
    </interactant>
    <organismsDiffer>false</organismsDiffer>
    <experiments>3</experiments>
</comment>
<comment type="interaction">
    <interactant intactId="EBI-3809">
        <id>P53323</id>
    </interactant>
    <interactant intactId="EBI-22211">
        <id>P32642</id>
        <label>GRX4</label>
    </interactant>
    <organismsDiffer>false</organismsDiffer>
    <experiments>11</experiments>
</comment>
<comment type="interaction">
    <interactant intactId="EBI-3809">
        <id>P53323</id>
    </interactant>
    <interactant intactId="EBI-26411">
        <id>P36132</id>
        <label>KAE1</label>
    </interactant>
    <organismsDiffer>false</organismsDiffer>
    <experiments>22</experiments>
</comment>
<comment type="subcellular location">
    <subcellularLocation>
        <location evidence="5">Cytoplasm</location>
    </subcellularLocation>
    <subcellularLocation>
        <location evidence="5">Nucleus</location>
    </subcellularLocation>
    <subcellularLocation>
        <location evidence="5">Chromosome</location>
        <location evidence="5">Telomere</location>
    </subcellularLocation>
</comment>
<comment type="domain">
    <text evidence="1 14">This protein is considered an atypical serine/threonine kinase, because it lacks the conventional structural elements necessary for the substrate recognition as well as a lysine residue that in all other serine/threonine kinases participates in the catalytic event (PubMed:12023889). BUD32 has protein kinase activity in vitro, but in the context of the EKC/KEOPS complex, the catalytic subunit KAE1 switches the activity of BUD32 from kinase into ATPase (By similarity).</text>
</comment>
<comment type="miscellaneous">
    <text evidence="6">Present with 3020 molecules/cell in log phase SD medium.</text>
</comment>
<comment type="similarity">
    <text evidence="13">Belongs to the protein kinase superfamily. BUD32 family.</text>
</comment>
<reference key="1">
    <citation type="journal article" date="1997" name="Yeast">
        <title>Analysis of an 11.6 kb region from the right arm of chromosome VII of Saccharomyces cerevisiae between the RAD2 and the MES1 genes reveals the presence of three new genes.</title>
        <authorList>
            <person name="Clemente M.L."/>
            <person name="Sartori G."/>
            <person name="Cardazzo B."/>
            <person name="Carignani G."/>
        </authorList>
    </citation>
    <scope>NUCLEOTIDE SEQUENCE [GENOMIC DNA]</scope>
    <source>
        <strain>ATCC 96604 / S288c / FY1679</strain>
    </source>
</reference>
<reference key="2">
    <citation type="journal article" date="1997" name="Nature">
        <title>The nucleotide sequence of Saccharomyces cerevisiae chromosome VII.</title>
        <authorList>
            <person name="Tettelin H."/>
            <person name="Agostoni-Carbone M.L."/>
            <person name="Albermann K."/>
            <person name="Albers M."/>
            <person name="Arroyo J."/>
            <person name="Backes U."/>
            <person name="Barreiros T."/>
            <person name="Bertani I."/>
            <person name="Bjourson A.J."/>
            <person name="Brueckner M."/>
            <person name="Bruschi C.V."/>
            <person name="Carignani G."/>
            <person name="Castagnoli L."/>
            <person name="Cerdan E."/>
            <person name="Clemente M.L."/>
            <person name="Coblenz A."/>
            <person name="Coglievina M."/>
            <person name="Coissac E."/>
            <person name="Defoor E."/>
            <person name="Del Bino S."/>
            <person name="Delius H."/>
            <person name="Delneri D."/>
            <person name="de Wergifosse P."/>
            <person name="Dujon B."/>
            <person name="Durand P."/>
            <person name="Entian K.-D."/>
            <person name="Eraso P."/>
            <person name="Escribano V."/>
            <person name="Fabiani L."/>
            <person name="Fartmann B."/>
            <person name="Feroli F."/>
            <person name="Feuermann M."/>
            <person name="Frontali L."/>
            <person name="Garcia-Gonzalez M."/>
            <person name="Garcia-Saez M.I."/>
            <person name="Goffeau A."/>
            <person name="Guerreiro P."/>
            <person name="Hani J."/>
            <person name="Hansen M."/>
            <person name="Hebling U."/>
            <person name="Hernandez K."/>
            <person name="Heumann K."/>
            <person name="Hilger F."/>
            <person name="Hofmann B."/>
            <person name="Indge K.J."/>
            <person name="James C.M."/>
            <person name="Klima R."/>
            <person name="Koetter P."/>
            <person name="Kramer B."/>
            <person name="Kramer W."/>
            <person name="Lauquin G."/>
            <person name="Leuther H."/>
            <person name="Louis E.J."/>
            <person name="Maillier E."/>
            <person name="Marconi A."/>
            <person name="Martegani E."/>
            <person name="Mazon M.J."/>
            <person name="Mazzoni C."/>
            <person name="McReynolds A.D.K."/>
            <person name="Melchioretto P."/>
            <person name="Mewes H.-W."/>
            <person name="Minenkova O."/>
            <person name="Mueller-Auer S."/>
            <person name="Nawrocki A."/>
            <person name="Netter P."/>
            <person name="Neu R."/>
            <person name="Nombela C."/>
            <person name="Oliver S.G."/>
            <person name="Panzeri L."/>
            <person name="Paoluzi S."/>
            <person name="Plevani P."/>
            <person name="Portetelle D."/>
            <person name="Portillo F."/>
            <person name="Potier S."/>
            <person name="Purnelle B."/>
            <person name="Rieger M."/>
            <person name="Riles L."/>
            <person name="Rinaldi T."/>
            <person name="Robben J."/>
            <person name="Rodrigues-Pousada C."/>
            <person name="Rodriguez-Belmonte E."/>
            <person name="Rodriguez-Torres A.M."/>
            <person name="Rose M."/>
            <person name="Ruzzi M."/>
            <person name="Saliola M."/>
            <person name="Sanchez-Perez M."/>
            <person name="Schaefer B."/>
            <person name="Schaefer M."/>
            <person name="Scharfe M."/>
            <person name="Schmidheini T."/>
            <person name="Schreer A."/>
            <person name="Skala J."/>
            <person name="Souciet J.-L."/>
            <person name="Steensma H.Y."/>
            <person name="Talla E."/>
            <person name="Thierry A."/>
            <person name="Vandenbol M."/>
            <person name="van der Aart Q.J.M."/>
            <person name="Van Dyck L."/>
            <person name="Vanoni M."/>
            <person name="Verhasselt P."/>
            <person name="Voet M."/>
            <person name="Volckaert G."/>
            <person name="Wambutt R."/>
            <person name="Watson M.D."/>
            <person name="Weber N."/>
            <person name="Wedler E."/>
            <person name="Wedler H."/>
            <person name="Wipfli P."/>
            <person name="Wolf K."/>
            <person name="Wright L.F."/>
            <person name="Zaccaria P."/>
            <person name="Zimmermann M."/>
            <person name="Zollner A."/>
            <person name="Kleine K."/>
        </authorList>
    </citation>
    <scope>NUCLEOTIDE SEQUENCE [LARGE SCALE GENOMIC DNA]</scope>
    <source>
        <strain>ATCC 204508 / S288c</strain>
    </source>
</reference>
<reference key="3">
    <citation type="journal article" date="2014" name="G3 (Bethesda)">
        <title>The reference genome sequence of Saccharomyces cerevisiae: Then and now.</title>
        <authorList>
            <person name="Engel S.R."/>
            <person name="Dietrich F.S."/>
            <person name="Fisk D.G."/>
            <person name="Binkley G."/>
            <person name="Balakrishnan R."/>
            <person name="Costanzo M.C."/>
            <person name="Dwight S.S."/>
            <person name="Hitz B.C."/>
            <person name="Karra K."/>
            <person name="Nash R.S."/>
            <person name="Weng S."/>
            <person name="Wong E.D."/>
            <person name="Lloyd P."/>
            <person name="Skrzypek M.S."/>
            <person name="Miyasato S.R."/>
            <person name="Simison M."/>
            <person name="Cherry J.M."/>
        </authorList>
    </citation>
    <scope>GENOME REANNOTATION</scope>
    <source>
        <strain>ATCC 204508 / S288c</strain>
    </source>
</reference>
<reference key="4">
    <citation type="journal article" date="2007" name="Genome Res.">
        <title>Approaching a complete repository of sequence-verified protein-encoding clones for Saccharomyces cerevisiae.</title>
        <authorList>
            <person name="Hu Y."/>
            <person name="Rolfs A."/>
            <person name="Bhullar B."/>
            <person name="Murthy T.V.S."/>
            <person name="Zhu C."/>
            <person name="Berger M.F."/>
            <person name="Camargo A.A."/>
            <person name="Kelley F."/>
            <person name="McCarron S."/>
            <person name="Jepson D."/>
            <person name="Richardson A."/>
            <person name="Raphael J."/>
            <person name="Moreira D."/>
            <person name="Taycher E."/>
            <person name="Zuo D."/>
            <person name="Mohr S."/>
            <person name="Kane M.F."/>
            <person name="Williamson J."/>
            <person name="Simpson A.J.G."/>
            <person name="Bulyk M.L."/>
            <person name="Harlow E."/>
            <person name="Marsischky G."/>
            <person name="Kolodner R.D."/>
            <person name="LaBaer J."/>
        </authorList>
    </citation>
    <scope>NUCLEOTIDE SEQUENCE [GENOMIC DNA]</scope>
    <source>
        <strain>ATCC 204508 / S288c</strain>
    </source>
</reference>
<reference key="5">
    <citation type="journal article" date="2001" name="Mol. Biol. Cell">
        <title>A genomic study of the bipolar bud site selection pattern in Saccharomyces cerevisiae.</title>
        <authorList>
            <person name="Ni L."/>
            <person name="Snyder M."/>
        </authorList>
    </citation>
    <scope>INVOLVEMENT IN BUDDING</scope>
</reference>
<reference key="6">
    <citation type="journal article" date="2002" name="Biochem. J.">
        <title>Structure-function analysis of yeast piD261/Bud32, an atypical protein kinase essential for normal cell life.</title>
        <authorList>
            <person name="Facchin S."/>
            <person name="Lopreiato R."/>
            <person name="Stocchetto S."/>
            <person name="Arrigoni G."/>
            <person name="Cesaro L."/>
            <person name="Marin O."/>
            <person name="Carignani G."/>
            <person name="Pinna L.A."/>
        </authorList>
    </citation>
    <scope>PHOSPHORYLATION AT SER-187 AND SER-189</scope>
    <scope>MUTAGENESIS OF SER-187 AND SER-189</scope>
</reference>
<reference key="7">
    <citation type="journal article" date="2003" name="Nature">
        <title>Global analysis of protein localization in budding yeast.</title>
        <authorList>
            <person name="Huh W.-K."/>
            <person name="Falvo J.V."/>
            <person name="Gerke L.C."/>
            <person name="Carroll A.S."/>
            <person name="Howson R.W."/>
            <person name="Weissman J.S."/>
            <person name="O'Shea E.K."/>
        </authorList>
    </citation>
    <scope>SUBCELLULAR LOCATION [LARGE SCALE ANALYSIS]</scope>
</reference>
<reference key="8">
    <citation type="journal article" date="2003" name="Nature">
        <title>Global analysis of protein expression in yeast.</title>
        <authorList>
            <person name="Ghaemmaghami S."/>
            <person name="Huh W.-K."/>
            <person name="Bower K."/>
            <person name="Howson R.W."/>
            <person name="Belle A."/>
            <person name="Dephoure N."/>
            <person name="O'Shea E.K."/>
            <person name="Weissman J.S."/>
        </authorList>
    </citation>
    <scope>LEVEL OF PROTEIN EXPRESSION [LARGE SCALE ANALYSIS]</scope>
</reference>
<reference key="9">
    <citation type="journal article" date="2006" name="EMBO J.">
        <title>Yeast homolog of a cancer-testis antigen defines a new transcription complex.</title>
        <authorList>
            <person name="Kisseleva-Romanova E."/>
            <person name="Lopreiato R."/>
            <person name="Baudin-Baillieu A."/>
            <person name="Rousselle J.-C."/>
            <person name="Ilan L."/>
            <person name="Hofmann K."/>
            <person name="Namane A."/>
            <person name="Mann C."/>
            <person name="Libri D."/>
        </authorList>
    </citation>
    <scope>IDENTIFICATION IN THE EKC/KEOPS COMPLEX</scope>
    <scope>FUNCTION OF THE EKC/KEOPS COMPLEX</scope>
    <scope>IDENTIFICATION BY MASS SPECTROMETRY</scope>
</reference>
<reference key="10">
    <citation type="journal article" date="2006" name="Cell">
        <title>A genome-wide screen identifies the evolutionarily conserved KEOPS complex as a telomere regulator.</title>
        <authorList>
            <person name="Downey M."/>
            <person name="Houlsworth R."/>
            <person name="Maringele L."/>
            <person name="Rollie A."/>
            <person name="Brehme M."/>
            <person name="Galicia S."/>
            <person name="Guillard S."/>
            <person name="Partington M."/>
            <person name="Zubko M.K."/>
            <person name="Krogan N.J."/>
            <person name="Emili A."/>
            <person name="Greenblatt J.F."/>
            <person name="Harrington L."/>
            <person name="Lydall D."/>
            <person name="Durocher D."/>
        </authorList>
    </citation>
    <scope>FUNCTION</scope>
    <scope>IDENTIFICATION IN THE EKC/KEOPS COMPLEX</scope>
</reference>
<reference key="11">
    <citation type="journal article" date="2011" name="EMBO J.">
        <title>The highly conserved KEOPS/EKC complex is essential for a universal tRNA modification, t6A.</title>
        <authorList>
            <person name="Srinivasan M."/>
            <person name="Mehta P."/>
            <person name="Yu Y."/>
            <person name="Prugar E."/>
            <person name="Koonin E.V."/>
            <person name="Karzai A.W."/>
            <person name="Sternglanz R."/>
        </authorList>
    </citation>
    <scope>FUNCTION IN T(6)A37 FORMATION</scope>
</reference>
<reference key="12">
    <citation type="journal article" date="2011" name="Nucleic Acids Res.">
        <title>Gcn4 misregulation reveals a direct role for the evolutionary conserved EKC/KEOPS in the t6A modification of tRNAs.</title>
        <authorList>
            <person name="Daugeron M.C."/>
            <person name="Lenstra T.L."/>
            <person name="Frizzarin M."/>
            <person name="El Yacoubi B."/>
            <person name="Liu X."/>
            <person name="Baudin-Baillieu A."/>
            <person name="Lijnzaad P."/>
            <person name="Decourty L."/>
            <person name="Saveanu C."/>
            <person name="Jacquier A."/>
            <person name="Holstege F.C."/>
            <person name="de Crecy-Lagard V."/>
            <person name="van Tilbeurgh H."/>
            <person name="Libri D."/>
        </authorList>
    </citation>
    <scope>FUNCTION IN T(6)A37 FORMATION</scope>
</reference>
<reference key="13">
    <citation type="journal article" date="2013" name="Nucleic Acids Res.">
        <title>In vitro biosynthesis of a universal t6A tRNA modification in Archaea and Eukarya.</title>
        <authorList>
            <person name="Perrochia L."/>
            <person name="Crozat E."/>
            <person name="Hecker A."/>
            <person name="Zhang W."/>
            <person name="Bareille J."/>
            <person name="Collinet B."/>
            <person name="van Tilbeurgh H."/>
            <person name="Forterre P."/>
            <person name="Basta T."/>
        </authorList>
    </citation>
    <scope>FUNCTION IN T(6)A TRNA MODIFICATION</scope>
</reference>
<reference key="14">
    <citation type="journal article" date="2013" name="Nucleic Acids Res.">
        <title>Reconstitution and characterization of eukaryotic N6-threonylcarbamoylation of tRNA using a minimal enzyme system.</title>
        <authorList>
            <person name="Wan L.C."/>
            <person name="Mao D.Y."/>
            <person name="Neculai D."/>
            <person name="Strecker J."/>
            <person name="Chiovitti D."/>
            <person name="Kurinov I."/>
            <person name="Poda G."/>
            <person name="Thevakumaran N."/>
            <person name="Yuan F."/>
            <person name="Szilard R.K."/>
            <person name="Lissina E."/>
            <person name="Nislow C."/>
            <person name="Caudy A.A."/>
            <person name="Durocher D."/>
            <person name="Sicheri F."/>
        </authorList>
    </citation>
    <scope>FUNCTION IN THE EKC/KEOPS COMPLEX</scope>
</reference>
<proteinExistence type="evidence at protein level"/>
<name>BUD32_YEAST</name>
<protein>
    <recommendedName>
        <fullName>EKC/KEOPS complex subunit BUD32</fullName>
        <ecNumber evidence="1">3.6.-.-</ecNumber>
    </recommendedName>
    <alternativeName>
        <fullName>Atypical serine/threonine protein kinase BUD32</fullName>
        <ecNumber evidence="14">2.7.11.1</ecNumber>
    </alternativeName>
    <alternativeName>
        <fullName>Bud site selection protein 32</fullName>
    </alternativeName>
    <alternativeName>
        <fullName>Low-dye-binding protein 14</fullName>
    </alternativeName>
    <alternativeName>
        <fullName>piD261</fullName>
    </alternativeName>
</protein>
<accession>P53323</accession>
<accession>D6VV41</accession>
<gene>
    <name type="primary">BUD32</name>
    <name type="synonym">LDB14</name>
    <name type="ordered locus">YGR262C</name>
</gene>